<dbReference type="EC" id="2.5.1.61"/>
<dbReference type="EMBL" id="AE000782">
    <property type="protein sequence ID" value="AAB90000.1"/>
    <property type="molecule type" value="Genomic_DNA"/>
</dbReference>
<dbReference type="PIR" id="A69405">
    <property type="entry name" value="A69405"/>
</dbReference>
<dbReference type="RefSeq" id="WP_010878737.1">
    <property type="nucleotide sequence ID" value="NC_000917.1"/>
</dbReference>
<dbReference type="SMR" id="O29026"/>
<dbReference type="STRING" id="224325.AF_1242"/>
<dbReference type="PaxDb" id="224325-AF_1242"/>
<dbReference type="EnsemblBacteria" id="AAB90000">
    <property type="protein sequence ID" value="AAB90000"/>
    <property type="gene ID" value="AF_1242"/>
</dbReference>
<dbReference type="GeneID" id="24794845"/>
<dbReference type="KEGG" id="afu:AF_1242"/>
<dbReference type="eggNOG" id="arCOG04299">
    <property type="taxonomic scope" value="Archaea"/>
</dbReference>
<dbReference type="HOGENOM" id="CLU_019704_1_0_2"/>
<dbReference type="OrthoDB" id="8042at2157"/>
<dbReference type="PhylomeDB" id="O29026"/>
<dbReference type="UniPathway" id="UPA00251">
    <property type="reaction ID" value="UER00319"/>
</dbReference>
<dbReference type="Proteomes" id="UP000002199">
    <property type="component" value="Chromosome"/>
</dbReference>
<dbReference type="GO" id="GO:0005737">
    <property type="term" value="C:cytoplasm"/>
    <property type="evidence" value="ECO:0007669"/>
    <property type="project" value="TreeGrafter"/>
</dbReference>
<dbReference type="GO" id="GO:0004418">
    <property type="term" value="F:hydroxymethylbilane synthase activity"/>
    <property type="evidence" value="ECO:0007669"/>
    <property type="project" value="UniProtKB-UniRule"/>
</dbReference>
<dbReference type="GO" id="GO:0006782">
    <property type="term" value="P:protoporphyrinogen IX biosynthetic process"/>
    <property type="evidence" value="ECO:0007669"/>
    <property type="project" value="UniProtKB-UniRule"/>
</dbReference>
<dbReference type="CDD" id="cd13644">
    <property type="entry name" value="PBP2_HemC_archaea"/>
    <property type="match status" value="1"/>
</dbReference>
<dbReference type="FunFam" id="3.40.190.10:FF:000005">
    <property type="entry name" value="Porphobilinogen deaminase"/>
    <property type="match status" value="1"/>
</dbReference>
<dbReference type="Gene3D" id="3.40.190.10">
    <property type="entry name" value="Periplasmic binding protein-like II"/>
    <property type="match status" value="2"/>
</dbReference>
<dbReference type="Gene3D" id="3.30.160.40">
    <property type="entry name" value="Porphobilinogen deaminase, C-terminal domain"/>
    <property type="match status" value="1"/>
</dbReference>
<dbReference type="HAMAP" id="MF_00260">
    <property type="entry name" value="Porphobil_deam"/>
    <property type="match status" value="1"/>
</dbReference>
<dbReference type="InterPro" id="IPR000860">
    <property type="entry name" value="HemC"/>
</dbReference>
<dbReference type="InterPro" id="IPR022419">
    <property type="entry name" value="Porphobilin_deaminase_cofac_BS"/>
</dbReference>
<dbReference type="InterPro" id="IPR022417">
    <property type="entry name" value="Porphobilin_deaminase_N"/>
</dbReference>
<dbReference type="InterPro" id="IPR022418">
    <property type="entry name" value="Porphobilinogen_deaminase_C"/>
</dbReference>
<dbReference type="InterPro" id="IPR036803">
    <property type="entry name" value="Porphobilinogen_deaminase_C_sf"/>
</dbReference>
<dbReference type="NCBIfam" id="TIGR00212">
    <property type="entry name" value="hemC"/>
    <property type="match status" value="1"/>
</dbReference>
<dbReference type="PANTHER" id="PTHR11557">
    <property type="entry name" value="PORPHOBILINOGEN DEAMINASE"/>
    <property type="match status" value="1"/>
</dbReference>
<dbReference type="PANTHER" id="PTHR11557:SF0">
    <property type="entry name" value="PORPHOBILINOGEN DEAMINASE"/>
    <property type="match status" value="1"/>
</dbReference>
<dbReference type="Pfam" id="PF01379">
    <property type="entry name" value="Porphobil_deam"/>
    <property type="match status" value="1"/>
</dbReference>
<dbReference type="Pfam" id="PF03900">
    <property type="entry name" value="Porphobil_deamC"/>
    <property type="match status" value="1"/>
</dbReference>
<dbReference type="PIRSF" id="PIRSF001438">
    <property type="entry name" value="4pyrrol_synth_OHMeBilane_synth"/>
    <property type="match status" value="1"/>
</dbReference>
<dbReference type="PRINTS" id="PR00151">
    <property type="entry name" value="PORPHBDMNASE"/>
</dbReference>
<dbReference type="SUPFAM" id="SSF53850">
    <property type="entry name" value="Periplasmic binding protein-like II"/>
    <property type="match status" value="1"/>
</dbReference>
<dbReference type="SUPFAM" id="SSF54782">
    <property type="entry name" value="Porphobilinogen deaminase (hydroxymethylbilane synthase), C-terminal domain"/>
    <property type="match status" value="1"/>
</dbReference>
<dbReference type="PROSITE" id="PS00533">
    <property type="entry name" value="PORPHOBILINOGEN_DEAM"/>
    <property type="match status" value="1"/>
</dbReference>
<keyword id="KW-0627">Porphyrin biosynthesis</keyword>
<keyword id="KW-1185">Reference proteome</keyword>
<keyword id="KW-0808">Transferase</keyword>
<reference key="1">
    <citation type="journal article" date="1997" name="Nature">
        <title>The complete genome sequence of the hyperthermophilic, sulphate-reducing archaeon Archaeoglobus fulgidus.</title>
        <authorList>
            <person name="Klenk H.-P."/>
            <person name="Clayton R.A."/>
            <person name="Tomb J.-F."/>
            <person name="White O."/>
            <person name="Nelson K.E."/>
            <person name="Ketchum K.A."/>
            <person name="Dodson R.J."/>
            <person name="Gwinn M.L."/>
            <person name="Hickey E.K."/>
            <person name="Peterson J.D."/>
            <person name="Richardson D.L."/>
            <person name="Kerlavage A.R."/>
            <person name="Graham D.E."/>
            <person name="Kyrpides N.C."/>
            <person name="Fleischmann R.D."/>
            <person name="Quackenbush J."/>
            <person name="Lee N.H."/>
            <person name="Sutton G.G."/>
            <person name="Gill S.R."/>
            <person name="Kirkness E.F."/>
            <person name="Dougherty B.A."/>
            <person name="McKenney K."/>
            <person name="Adams M.D."/>
            <person name="Loftus B.J."/>
            <person name="Peterson S.N."/>
            <person name="Reich C.I."/>
            <person name="McNeil L.K."/>
            <person name="Badger J.H."/>
            <person name="Glodek A."/>
            <person name="Zhou L."/>
            <person name="Overbeek R."/>
            <person name="Gocayne J.D."/>
            <person name="Weidman J.F."/>
            <person name="McDonald L.A."/>
            <person name="Utterback T.R."/>
            <person name="Cotton M.D."/>
            <person name="Spriggs T."/>
            <person name="Artiach P."/>
            <person name="Kaine B.P."/>
            <person name="Sykes S.M."/>
            <person name="Sadow P.W."/>
            <person name="D'Andrea K.P."/>
            <person name="Bowman C."/>
            <person name="Fujii C."/>
            <person name="Garland S.A."/>
            <person name="Mason T.M."/>
            <person name="Olsen G.J."/>
            <person name="Fraser C.M."/>
            <person name="Smith H.O."/>
            <person name="Woese C.R."/>
            <person name="Venter J.C."/>
        </authorList>
    </citation>
    <scope>NUCLEOTIDE SEQUENCE [LARGE SCALE GENOMIC DNA]</scope>
    <source>
        <strain>ATCC 49558 / DSM 4304 / JCM 9628 / NBRC 100126 / VC-16</strain>
    </source>
</reference>
<organism>
    <name type="scientific">Archaeoglobus fulgidus (strain ATCC 49558 / DSM 4304 / JCM 9628 / NBRC 100126 / VC-16)</name>
    <dbReference type="NCBI Taxonomy" id="224325"/>
    <lineage>
        <taxon>Archaea</taxon>
        <taxon>Methanobacteriati</taxon>
        <taxon>Methanobacteriota</taxon>
        <taxon>Archaeoglobi</taxon>
        <taxon>Archaeoglobales</taxon>
        <taxon>Archaeoglobaceae</taxon>
        <taxon>Archaeoglobus</taxon>
    </lineage>
</organism>
<evidence type="ECO:0000250" key="1"/>
<evidence type="ECO:0000305" key="2"/>
<name>HEM3_ARCFU</name>
<protein>
    <recommendedName>
        <fullName>Probable porphobilinogen deaminase</fullName>
        <shortName>PBG</shortName>
        <ecNumber>2.5.1.61</ecNumber>
    </recommendedName>
    <alternativeName>
        <fullName>Hydroxymethylbilane synthase</fullName>
        <shortName>HMBS</shortName>
    </alternativeName>
    <alternativeName>
        <fullName>Pre-uroporphyrinogen synthase</fullName>
    </alternativeName>
</protein>
<sequence>MKLIVGTRGSKLALAQTNKVAERLKERYEVEIRIVKTAGDIMKDKPLYEFKGMGAFVRALDTALAEGKVDVAVHSFKDVPSQRVEGTVVAAVIERDSPCDVLISRDGSTLEELDEGAVVGTSSLRRRAQLSRLRGDLRFENLRGNLDTRLRKLREGNYDAIVVAEAGLKRLGLDREVEYQPFPPEVIVPPANQGIIAIATRKGEEDLVAFLNDEKTWLEAMVERAVIKELGVGCAVPVGVYAEAQSRVRLICEILDKKYLRVEEKLSKDTAVEEAAEIGKDLRKEIYGG</sequence>
<comment type="function">
    <text evidence="1">Tetrapolymerization of the monopyrrole PBG into the hydroxymethylbilane pre-uroporphyrinogen in several discrete steps.</text>
</comment>
<comment type="catalytic activity">
    <reaction>
        <text>4 porphobilinogen + H2O = hydroxymethylbilane + 4 NH4(+)</text>
        <dbReference type="Rhea" id="RHEA:13185"/>
        <dbReference type="ChEBI" id="CHEBI:15377"/>
        <dbReference type="ChEBI" id="CHEBI:28938"/>
        <dbReference type="ChEBI" id="CHEBI:57845"/>
        <dbReference type="ChEBI" id="CHEBI:58126"/>
        <dbReference type="EC" id="2.5.1.61"/>
    </reaction>
</comment>
<comment type="cofactor">
    <cofactor evidence="1">
        <name>dipyrromethane</name>
        <dbReference type="ChEBI" id="CHEBI:60342"/>
    </cofactor>
    <text evidence="1">Binds 1 dipyrromethane group covalently.</text>
</comment>
<comment type="pathway">
    <text>Porphyrin-containing compound metabolism; protoporphyrin-IX biosynthesis; coproporphyrinogen-III from 5-aminolevulinate: step 2/4.</text>
</comment>
<comment type="miscellaneous">
    <text evidence="1">The porphobilinogen subunits are added to the dipyrromethane group.</text>
</comment>
<comment type="similarity">
    <text evidence="2">Belongs to the HMBS family.</text>
</comment>
<accession>O29026</accession>
<proteinExistence type="inferred from homology"/>
<gene>
    <name type="primary">hemC</name>
    <name type="ordered locus">AF_1242</name>
</gene>
<feature type="chain" id="PRO_0000143021" description="Probable porphobilinogen deaminase">
    <location>
        <begin position="1"/>
        <end position="289"/>
    </location>
</feature>
<feature type="modified residue" description="S-(dipyrrolylmethanemethyl)cysteine" evidence="1">
    <location>
        <position position="234"/>
    </location>
</feature>